<dbReference type="EC" id="3.6.4.12" evidence="2"/>
<dbReference type="EMBL" id="D86725">
    <property type="protein sequence ID" value="BAA22148.1"/>
    <property type="molecule type" value="mRNA"/>
</dbReference>
<dbReference type="EMBL" id="AF004105">
    <property type="protein sequence ID" value="AAC16250.1"/>
    <property type="molecule type" value="mRNA"/>
</dbReference>
<dbReference type="EMBL" id="AK129039">
    <property type="protein sequence ID" value="BAC97849.1"/>
    <property type="status" value="ALT_INIT"/>
    <property type="molecule type" value="mRNA"/>
</dbReference>
<dbReference type="EMBL" id="AK088156">
    <property type="protein sequence ID" value="BAC40178.1"/>
    <property type="molecule type" value="mRNA"/>
</dbReference>
<dbReference type="EMBL" id="BC055318">
    <property type="protein sequence ID" value="AAH55318.1"/>
    <property type="molecule type" value="mRNA"/>
</dbReference>
<dbReference type="EMBL" id="U89403">
    <property type="protein sequence ID" value="AAC36510.1"/>
    <property type="molecule type" value="mRNA"/>
</dbReference>
<dbReference type="CCDS" id="CCDS39554.1"/>
<dbReference type="PIR" id="T10067">
    <property type="entry name" value="T10067"/>
</dbReference>
<dbReference type="RefSeq" id="NP_032590.2">
    <property type="nucleotide sequence ID" value="NM_008564.2"/>
</dbReference>
<dbReference type="SMR" id="P97310"/>
<dbReference type="BioGRID" id="201346">
    <property type="interactions" value="25"/>
</dbReference>
<dbReference type="ComplexPortal" id="CPX-2941">
    <property type="entry name" value="MCM complex"/>
</dbReference>
<dbReference type="CORUM" id="P97310"/>
<dbReference type="DIP" id="DIP-33057N"/>
<dbReference type="FunCoup" id="P97310">
    <property type="interactions" value="2705"/>
</dbReference>
<dbReference type="IntAct" id="P97310">
    <property type="interactions" value="15"/>
</dbReference>
<dbReference type="STRING" id="10090.ENSMUSP00000061923"/>
<dbReference type="ChEMBL" id="CHEMBL4879449"/>
<dbReference type="GlyGen" id="P97310">
    <property type="glycosylation" value="1 site, 1 O-linked glycan (1 site)"/>
</dbReference>
<dbReference type="iPTMnet" id="P97310"/>
<dbReference type="PhosphoSitePlus" id="P97310"/>
<dbReference type="SwissPalm" id="P97310"/>
<dbReference type="jPOST" id="P97310"/>
<dbReference type="PaxDb" id="10090-ENSMUSP00000061923"/>
<dbReference type="PeptideAtlas" id="P97310"/>
<dbReference type="ProteomicsDB" id="295708"/>
<dbReference type="Pumba" id="P97310"/>
<dbReference type="Antibodypedia" id="4369">
    <property type="antibodies" value="1094 antibodies from 43 providers"/>
</dbReference>
<dbReference type="DNASU" id="17216"/>
<dbReference type="Ensembl" id="ENSMUST00000058011.8">
    <property type="protein sequence ID" value="ENSMUSP00000061923.7"/>
    <property type="gene ID" value="ENSMUSG00000002870.9"/>
</dbReference>
<dbReference type="GeneID" id="17216"/>
<dbReference type="KEGG" id="mmu:17216"/>
<dbReference type="UCSC" id="uc009cvx.2">
    <property type="organism name" value="mouse"/>
</dbReference>
<dbReference type="AGR" id="MGI:105380"/>
<dbReference type="CTD" id="4171"/>
<dbReference type="MGI" id="MGI:105380">
    <property type="gene designation" value="Mcm2"/>
</dbReference>
<dbReference type="VEuPathDB" id="HostDB:ENSMUSG00000002870"/>
<dbReference type="eggNOG" id="KOG0477">
    <property type="taxonomic scope" value="Eukaryota"/>
</dbReference>
<dbReference type="GeneTree" id="ENSGT01050000244824"/>
<dbReference type="HOGENOM" id="CLU_000995_0_1_1"/>
<dbReference type="InParanoid" id="P97310"/>
<dbReference type="OMA" id="TYERVTT"/>
<dbReference type="OrthoDB" id="844at2759"/>
<dbReference type="PhylomeDB" id="P97310"/>
<dbReference type="TreeFam" id="TF300772"/>
<dbReference type="Reactome" id="R-MMU-176187">
    <property type="pathway name" value="Activation of ATR in response to replication stress"/>
</dbReference>
<dbReference type="Reactome" id="R-MMU-68867">
    <property type="pathway name" value="Assembly of the pre-replicative complex"/>
</dbReference>
<dbReference type="Reactome" id="R-MMU-68949">
    <property type="pathway name" value="Orc1 removal from chromatin"/>
</dbReference>
<dbReference type="Reactome" id="R-MMU-68962">
    <property type="pathway name" value="Activation of the pre-replicative complex"/>
</dbReference>
<dbReference type="Reactome" id="R-MMU-69052">
    <property type="pathway name" value="Switching of origins to a post-replicative state"/>
</dbReference>
<dbReference type="BioGRID-ORCS" id="17216">
    <property type="hits" value="27 hits in 80 CRISPR screens"/>
</dbReference>
<dbReference type="CD-CODE" id="01CA17F3">
    <property type="entry name" value="Centrosome"/>
</dbReference>
<dbReference type="ChiTaRS" id="Mcm2">
    <property type="organism name" value="mouse"/>
</dbReference>
<dbReference type="PRO" id="PR:P97310"/>
<dbReference type="Proteomes" id="UP000000589">
    <property type="component" value="Chromosome 6"/>
</dbReference>
<dbReference type="RNAct" id="P97310">
    <property type="molecule type" value="protein"/>
</dbReference>
<dbReference type="Bgee" id="ENSMUSG00000002870">
    <property type="expression patterns" value="Expressed in femorotibial joint and 222 other cell types or tissues"/>
</dbReference>
<dbReference type="ExpressionAtlas" id="P97310">
    <property type="expression patterns" value="baseline and differential"/>
</dbReference>
<dbReference type="GO" id="GO:0000785">
    <property type="term" value="C:chromatin"/>
    <property type="evidence" value="ECO:0007669"/>
    <property type="project" value="Ensembl"/>
</dbReference>
<dbReference type="GO" id="GO:0005929">
    <property type="term" value="C:cilium"/>
    <property type="evidence" value="ECO:0007669"/>
    <property type="project" value="Ensembl"/>
</dbReference>
<dbReference type="GO" id="GO:0071162">
    <property type="term" value="C:CMG complex"/>
    <property type="evidence" value="ECO:0000250"/>
    <property type="project" value="UniProtKB"/>
</dbReference>
<dbReference type="GO" id="GO:0005737">
    <property type="term" value="C:cytoplasm"/>
    <property type="evidence" value="ECO:0000250"/>
    <property type="project" value="UniProtKB"/>
</dbReference>
<dbReference type="GO" id="GO:0005829">
    <property type="term" value="C:cytosol"/>
    <property type="evidence" value="ECO:0007669"/>
    <property type="project" value="Ensembl"/>
</dbReference>
<dbReference type="GO" id="GO:0042555">
    <property type="term" value="C:MCM complex"/>
    <property type="evidence" value="ECO:0000314"/>
    <property type="project" value="UniProtKB"/>
</dbReference>
<dbReference type="GO" id="GO:0005664">
    <property type="term" value="C:nuclear origin of replication recognition complex"/>
    <property type="evidence" value="ECO:0000314"/>
    <property type="project" value="MGI"/>
</dbReference>
<dbReference type="GO" id="GO:0005634">
    <property type="term" value="C:nucleus"/>
    <property type="evidence" value="ECO:0000314"/>
    <property type="project" value="MGI"/>
</dbReference>
<dbReference type="GO" id="GO:0005524">
    <property type="term" value="F:ATP binding"/>
    <property type="evidence" value="ECO:0007669"/>
    <property type="project" value="UniProtKB-KW"/>
</dbReference>
<dbReference type="GO" id="GO:0016887">
    <property type="term" value="F:ATP hydrolysis activity"/>
    <property type="evidence" value="ECO:0007669"/>
    <property type="project" value="RHEA"/>
</dbReference>
<dbReference type="GO" id="GO:0003688">
    <property type="term" value="F:DNA replication origin binding"/>
    <property type="evidence" value="ECO:0000314"/>
    <property type="project" value="MGI"/>
</dbReference>
<dbReference type="GO" id="GO:0019899">
    <property type="term" value="F:enzyme binding"/>
    <property type="evidence" value="ECO:0000353"/>
    <property type="project" value="BHF-UCL"/>
</dbReference>
<dbReference type="GO" id="GO:0004386">
    <property type="term" value="F:helicase activity"/>
    <property type="evidence" value="ECO:0007669"/>
    <property type="project" value="UniProtKB-KW"/>
</dbReference>
<dbReference type="GO" id="GO:0042393">
    <property type="term" value="F:histone binding"/>
    <property type="evidence" value="ECO:0000314"/>
    <property type="project" value="MGI"/>
</dbReference>
<dbReference type="GO" id="GO:0008270">
    <property type="term" value="F:zinc ion binding"/>
    <property type="evidence" value="ECO:0007669"/>
    <property type="project" value="UniProtKB-KW"/>
</dbReference>
<dbReference type="GO" id="GO:0006915">
    <property type="term" value="P:apoptotic process"/>
    <property type="evidence" value="ECO:0000250"/>
    <property type="project" value="UniProtKB"/>
</dbReference>
<dbReference type="GO" id="GO:0071353">
    <property type="term" value="P:cellular response to interleukin-4"/>
    <property type="evidence" value="ECO:0000314"/>
    <property type="project" value="MGI"/>
</dbReference>
<dbReference type="GO" id="GO:0090102">
    <property type="term" value="P:cochlea development"/>
    <property type="evidence" value="ECO:0000250"/>
    <property type="project" value="UniProtKB"/>
</dbReference>
<dbReference type="GO" id="GO:0006260">
    <property type="term" value="P:DNA replication"/>
    <property type="evidence" value="ECO:0000314"/>
    <property type="project" value="MGI"/>
</dbReference>
<dbReference type="GO" id="GO:0006270">
    <property type="term" value="P:DNA replication initiation"/>
    <property type="evidence" value="ECO:0000304"/>
    <property type="project" value="MGI"/>
</dbReference>
<dbReference type="GO" id="GO:0006334">
    <property type="term" value="P:nucleosome assembly"/>
    <property type="evidence" value="ECO:0000314"/>
    <property type="project" value="MGI"/>
</dbReference>
<dbReference type="GO" id="GO:0006279">
    <property type="term" value="P:premeiotic DNA replication"/>
    <property type="evidence" value="ECO:0000303"/>
    <property type="project" value="ComplexPortal"/>
</dbReference>
<dbReference type="CDD" id="cd17753">
    <property type="entry name" value="MCM2"/>
    <property type="match status" value="1"/>
</dbReference>
<dbReference type="FunFam" id="2.20.28.10:FF:000002">
    <property type="entry name" value="DNA helicase"/>
    <property type="match status" value="1"/>
</dbReference>
<dbReference type="FunFam" id="3.30.1640.10:FF:000005">
    <property type="entry name" value="DNA helicase"/>
    <property type="match status" value="1"/>
</dbReference>
<dbReference type="FunFam" id="3.40.50.300:FF:000138">
    <property type="entry name" value="DNA helicase"/>
    <property type="match status" value="1"/>
</dbReference>
<dbReference type="Gene3D" id="2.20.28.10">
    <property type="match status" value="1"/>
</dbReference>
<dbReference type="Gene3D" id="3.30.1640.10">
    <property type="entry name" value="mini-chromosome maintenance (MCM) complex, chain A, domain 1"/>
    <property type="match status" value="1"/>
</dbReference>
<dbReference type="Gene3D" id="2.40.50.140">
    <property type="entry name" value="Nucleic acid-binding proteins"/>
    <property type="match status" value="1"/>
</dbReference>
<dbReference type="Gene3D" id="3.40.50.300">
    <property type="entry name" value="P-loop containing nucleotide triphosphate hydrolases"/>
    <property type="match status" value="1"/>
</dbReference>
<dbReference type="InterPro" id="IPR031327">
    <property type="entry name" value="MCM"/>
</dbReference>
<dbReference type="InterPro" id="IPR008045">
    <property type="entry name" value="MCM2"/>
</dbReference>
<dbReference type="InterPro" id="IPR018525">
    <property type="entry name" value="MCM_CS"/>
</dbReference>
<dbReference type="InterPro" id="IPR001208">
    <property type="entry name" value="MCM_dom"/>
</dbReference>
<dbReference type="InterPro" id="IPR041562">
    <property type="entry name" value="MCM_lid"/>
</dbReference>
<dbReference type="InterPro" id="IPR027925">
    <property type="entry name" value="MCM_N"/>
</dbReference>
<dbReference type="InterPro" id="IPR033762">
    <property type="entry name" value="MCM_OB"/>
</dbReference>
<dbReference type="InterPro" id="IPR012340">
    <property type="entry name" value="NA-bd_OB-fold"/>
</dbReference>
<dbReference type="InterPro" id="IPR027417">
    <property type="entry name" value="P-loop_NTPase"/>
</dbReference>
<dbReference type="PANTHER" id="PTHR11630">
    <property type="entry name" value="DNA REPLICATION LICENSING FACTOR MCM FAMILY MEMBER"/>
    <property type="match status" value="1"/>
</dbReference>
<dbReference type="PANTHER" id="PTHR11630:SF44">
    <property type="entry name" value="DNA REPLICATION LICENSING FACTOR MCM2"/>
    <property type="match status" value="1"/>
</dbReference>
<dbReference type="Pfam" id="PF00493">
    <property type="entry name" value="MCM"/>
    <property type="match status" value="1"/>
</dbReference>
<dbReference type="Pfam" id="PF12619">
    <property type="entry name" value="MCM2_N"/>
    <property type="match status" value="1"/>
</dbReference>
<dbReference type="Pfam" id="PF17855">
    <property type="entry name" value="MCM_lid"/>
    <property type="match status" value="1"/>
</dbReference>
<dbReference type="Pfam" id="PF14551">
    <property type="entry name" value="MCM_N"/>
    <property type="match status" value="1"/>
</dbReference>
<dbReference type="Pfam" id="PF17207">
    <property type="entry name" value="MCM_OB"/>
    <property type="match status" value="1"/>
</dbReference>
<dbReference type="Pfam" id="PF23669">
    <property type="entry name" value="WH_MCM2"/>
    <property type="match status" value="1"/>
</dbReference>
<dbReference type="PRINTS" id="PR01657">
    <property type="entry name" value="MCMFAMILY"/>
</dbReference>
<dbReference type="PRINTS" id="PR01658">
    <property type="entry name" value="MCMPROTEIN2"/>
</dbReference>
<dbReference type="SMART" id="SM00350">
    <property type="entry name" value="MCM"/>
    <property type="match status" value="1"/>
</dbReference>
<dbReference type="SUPFAM" id="SSF50249">
    <property type="entry name" value="Nucleic acid-binding proteins"/>
    <property type="match status" value="1"/>
</dbReference>
<dbReference type="SUPFAM" id="SSF52540">
    <property type="entry name" value="P-loop containing nucleoside triphosphate hydrolases"/>
    <property type="match status" value="1"/>
</dbReference>
<dbReference type="PROSITE" id="PS00847">
    <property type="entry name" value="MCM_1"/>
    <property type="match status" value="1"/>
</dbReference>
<dbReference type="PROSITE" id="PS50051">
    <property type="entry name" value="MCM_2"/>
    <property type="match status" value="1"/>
</dbReference>
<organism>
    <name type="scientific">Mus musculus</name>
    <name type="common">Mouse</name>
    <dbReference type="NCBI Taxonomy" id="10090"/>
    <lineage>
        <taxon>Eukaryota</taxon>
        <taxon>Metazoa</taxon>
        <taxon>Chordata</taxon>
        <taxon>Craniata</taxon>
        <taxon>Vertebrata</taxon>
        <taxon>Euteleostomi</taxon>
        <taxon>Mammalia</taxon>
        <taxon>Eutheria</taxon>
        <taxon>Euarchontoglires</taxon>
        <taxon>Glires</taxon>
        <taxon>Rodentia</taxon>
        <taxon>Myomorpha</taxon>
        <taxon>Muroidea</taxon>
        <taxon>Muridae</taxon>
        <taxon>Murinae</taxon>
        <taxon>Mus</taxon>
        <taxon>Mus</taxon>
    </lineage>
</organism>
<reference key="1">
    <citation type="journal article" date="1996" name="Genes Cells">
        <title>Mouse MCM proteins: complex formation and transportation to the nucleus.</title>
        <authorList>
            <person name="Kimura H."/>
            <person name="Ohtomo T."/>
            <person name="Yamaguchi M."/>
            <person name="Ishii A."/>
            <person name="Sugimoto K."/>
        </authorList>
    </citation>
    <scope>NUCLEOTIDE SEQUENCE [MRNA]</scope>
    <scope>PROTEIN SEQUENCE OF 217-224; 376-384 AND 477-487</scope>
</reference>
<reference key="2">
    <citation type="submission" date="1997-08" db="EMBL/GenBank/DDBJ databases">
        <authorList>
            <person name="Kimura H."/>
        </authorList>
    </citation>
    <scope>SEQUENCE REVISION</scope>
</reference>
<reference key="3">
    <citation type="journal article" date="1997" name="Cancer Res.">
        <title>Clone 10d/BM28 (CDCL1), an early S-phase protein, is an important growth regulator of melanoma.</title>
        <authorList>
            <person name="Spanjaard R.A."/>
            <person name="Lee P.J."/>
            <person name="Sarkar S."/>
            <person name="Goedegebuure P.S."/>
            <person name="Eberlein T.J."/>
        </authorList>
    </citation>
    <scope>NUCLEOTIDE SEQUENCE [MRNA]</scope>
    <source>
        <tissue>Melanoma</tissue>
    </source>
</reference>
<reference key="4">
    <citation type="journal article" date="2003" name="DNA Res.">
        <title>Prediction of the coding sequences of mouse homologues of KIAA gene: III. The complete nucleotide sequences of 500 mouse KIAA-homologous cDNAs identified by screening of terminal sequences of cDNA clones randomly sampled from size-fractionated libraries.</title>
        <authorList>
            <person name="Okazaki N."/>
            <person name="Kikuno R."/>
            <person name="Ohara R."/>
            <person name="Inamoto S."/>
            <person name="Koseki H."/>
            <person name="Hiraoka S."/>
            <person name="Saga Y."/>
            <person name="Nagase T."/>
            <person name="Ohara O."/>
            <person name="Koga H."/>
        </authorList>
    </citation>
    <scope>NUCLEOTIDE SEQUENCE [LARGE SCALE MRNA]</scope>
    <source>
        <tissue>Embryonic tail</tissue>
    </source>
</reference>
<reference key="5">
    <citation type="journal article" date="2005" name="Science">
        <title>The transcriptional landscape of the mammalian genome.</title>
        <authorList>
            <person name="Carninci P."/>
            <person name="Kasukawa T."/>
            <person name="Katayama S."/>
            <person name="Gough J."/>
            <person name="Frith M.C."/>
            <person name="Maeda N."/>
            <person name="Oyama R."/>
            <person name="Ravasi T."/>
            <person name="Lenhard B."/>
            <person name="Wells C."/>
            <person name="Kodzius R."/>
            <person name="Shimokawa K."/>
            <person name="Bajic V.B."/>
            <person name="Brenner S.E."/>
            <person name="Batalov S."/>
            <person name="Forrest A.R."/>
            <person name="Zavolan M."/>
            <person name="Davis M.J."/>
            <person name="Wilming L.G."/>
            <person name="Aidinis V."/>
            <person name="Allen J.E."/>
            <person name="Ambesi-Impiombato A."/>
            <person name="Apweiler R."/>
            <person name="Aturaliya R.N."/>
            <person name="Bailey T.L."/>
            <person name="Bansal M."/>
            <person name="Baxter L."/>
            <person name="Beisel K.W."/>
            <person name="Bersano T."/>
            <person name="Bono H."/>
            <person name="Chalk A.M."/>
            <person name="Chiu K.P."/>
            <person name="Choudhary V."/>
            <person name="Christoffels A."/>
            <person name="Clutterbuck D.R."/>
            <person name="Crowe M.L."/>
            <person name="Dalla E."/>
            <person name="Dalrymple B.P."/>
            <person name="de Bono B."/>
            <person name="Della Gatta G."/>
            <person name="di Bernardo D."/>
            <person name="Down T."/>
            <person name="Engstrom P."/>
            <person name="Fagiolini M."/>
            <person name="Faulkner G."/>
            <person name="Fletcher C.F."/>
            <person name="Fukushima T."/>
            <person name="Furuno M."/>
            <person name="Futaki S."/>
            <person name="Gariboldi M."/>
            <person name="Georgii-Hemming P."/>
            <person name="Gingeras T.R."/>
            <person name="Gojobori T."/>
            <person name="Green R.E."/>
            <person name="Gustincich S."/>
            <person name="Harbers M."/>
            <person name="Hayashi Y."/>
            <person name="Hensch T.K."/>
            <person name="Hirokawa N."/>
            <person name="Hill D."/>
            <person name="Huminiecki L."/>
            <person name="Iacono M."/>
            <person name="Ikeo K."/>
            <person name="Iwama A."/>
            <person name="Ishikawa T."/>
            <person name="Jakt M."/>
            <person name="Kanapin A."/>
            <person name="Katoh M."/>
            <person name="Kawasawa Y."/>
            <person name="Kelso J."/>
            <person name="Kitamura H."/>
            <person name="Kitano H."/>
            <person name="Kollias G."/>
            <person name="Krishnan S.P."/>
            <person name="Kruger A."/>
            <person name="Kummerfeld S.K."/>
            <person name="Kurochkin I.V."/>
            <person name="Lareau L.F."/>
            <person name="Lazarevic D."/>
            <person name="Lipovich L."/>
            <person name="Liu J."/>
            <person name="Liuni S."/>
            <person name="McWilliam S."/>
            <person name="Madan Babu M."/>
            <person name="Madera M."/>
            <person name="Marchionni L."/>
            <person name="Matsuda H."/>
            <person name="Matsuzawa S."/>
            <person name="Miki H."/>
            <person name="Mignone F."/>
            <person name="Miyake S."/>
            <person name="Morris K."/>
            <person name="Mottagui-Tabar S."/>
            <person name="Mulder N."/>
            <person name="Nakano N."/>
            <person name="Nakauchi H."/>
            <person name="Ng P."/>
            <person name="Nilsson R."/>
            <person name="Nishiguchi S."/>
            <person name="Nishikawa S."/>
            <person name="Nori F."/>
            <person name="Ohara O."/>
            <person name="Okazaki Y."/>
            <person name="Orlando V."/>
            <person name="Pang K.C."/>
            <person name="Pavan W.J."/>
            <person name="Pavesi G."/>
            <person name="Pesole G."/>
            <person name="Petrovsky N."/>
            <person name="Piazza S."/>
            <person name="Reed J."/>
            <person name="Reid J.F."/>
            <person name="Ring B.Z."/>
            <person name="Ringwald M."/>
            <person name="Rost B."/>
            <person name="Ruan Y."/>
            <person name="Salzberg S.L."/>
            <person name="Sandelin A."/>
            <person name="Schneider C."/>
            <person name="Schoenbach C."/>
            <person name="Sekiguchi K."/>
            <person name="Semple C.A."/>
            <person name="Seno S."/>
            <person name="Sessa L."/>
            <person name="Sheng Y."/>
            <person name="Shibata Y."/>
            <person name="Shimada H."/>
            <person name="Shimada K."/>
            <person name="Silva D."/>
            <person name="Sinclair B."/>
            <person name="Sperling S."/>
            <person name="Stupka E."/>
            <person name="Sugiura K."/>
            <person name="Sultana R."/>
            <person name="Takenaka Y."/>
            <person name="Taki K."/>
            <person name="Tammoja K."/>
            <person name="Tan S.L."/>
            <person name="Tang S."/>
            <person name="Taylor M.S."/>
            <person name="Tegner J."/>
            <person name="Teichmann S.A."/>
            <person name="Ueda H.R."/>
            <person name="van Nimwegen E."/>
            <person name="Verardo R."/>
            <person name="Wei C.L."/>
            <person name="Yagi K."/>
            <person name="Yamanishi H."/>
            <person name="Zabarovsky E."/>
            <person name="Zhu S."/>
            <person name="Zimmer A."/>
            <person name="Hide W."/>
            <person name="Bult C."/>
            <person name="Grimmond S.M."/>
            <person name="Teasdale R.D."/>
            <person name="Liu E.T."/>
            <person name="Brusic V."/>
            <person name="Quackenbush J."/>
            <person name="Wahlestedt C."/>
            <person name="Mattick J.S."/>
            <person name="Hume D.A."/>
            <person name="Kai C."/>
            <person name="Sasaki D."/>
            <person name="Tomaru Y."/>
            <person name="Fukuda S."/>
            <person name="Kanamori-Katayama M."/>
            <person name="Suzuki M."/>
            <person name="Aoki J."/>
            <person name="Arakawa T."/>
            <person name="Iida J."/>
            <person name="Imamura K."/>
            <person name="Itoh M."/>
            <person name="Kato T."/>
            <person name="Kawaji H."/>
            <person name="Kawagashira N."/>
            <person name="Kawashima T."/>
            <person name="Kojima M."/>
            <person name="Kondo S."/>
            <person name="Konno H."/>
            <person name="Nakano K."/>
            <person name="Ninomiya N."/>
            <person name="Nishio T."/>
            <person name="Okada M."/>
            <person name="Plessy C."/>
            <person name="Shibata K."/>
            <person name="Shiraki T."/>
            <person name="Suzuki S."/>
            <person name="Tagami M."/>
            <person name="Waki K."/>
            <person name="Watahiki A."/>
            <person name="Okamura-Oho Y."/>
            <person name="Suzuki H."/>
            <person name="Kawai J."/>
            <person name="Hayashizaki Y."/>
        </authorList>
    </citation>
    <scope>NUCLEOTIDE SEQUENCE [LARGE SCALE MRNA]</scope>
    <source>
        <strain>NOD</strain>
        <tissue>Thymus</tissue>
    </source>
</reference>
<reference key="6">
    <citation type="journal article" date="2004" name="Genome Res.">
        <title>The status, quality, and expansion of the NIH full-length cDNA project: the Mammalian Gene Collection (MGC).</title>
        <authorList>
            <consortium name="The MGC Project Team"/>
        </authorList>
    </citation>
    <scope>NUCLEOTIDE SEQUENCE [LARGE SCALE MRNA]</scope>
    <source>
        <strain>C57BL/6J</strain>
        <tissue>Brain</tissue>
    </source>
</reference>
<reference key="7">
    <citation type="journal article" date="1998" name="Mol. Immunol.">
        <title>Expressed genes in interleukin-4 treated B cells identified by cDNA representational difference analysis.</title>
        <authorList>
            <person name="Chu C.C."/>
            <person name="Paul W.E."/>
        </authorList>
    </citation>
    <scope>NUCLEOTIDE SEQUENCE [MRNA] OF 477-668</scope>
    <source>
        <strain>BALB/cJ</strain>
        <tissue>Spleen</tissue>
    </source>
</reference>
<reference key="8">
    <citation type="journal article" date="1999" name="Mol. Cell. Biol.">
        <title>Biochemical analysis of the intrinsic Mcm4-Mcm6-mcm7 DNA helicase activity.</title>
        <authorList>
            <person name="You Z."/>
            <person name="Komamura Y."/>
            <person name="Ishimi Y."/>
        </authorList>
    </citation>
    <scope>FUNCTION</scope>
    <scope>IDENTIFICATION IN THE MCM2-7 COMPLEX</scope>
</reference>
<reference key="9">
    <citation type="journal article" date="1999" name="Mol. Gen. Genet.">
        <title>Identification, characterization and chromosomal localization of the cognate human and murine DBF4 genes.</title>
        <authorList>
            <person name="Lepke M."/>
            <person name="Puetter V."/>
            <person name="Staib C."/>
            <person name="Kneissl M."/>
            <person name="Berger C."/>
            <person name="Hoehn K."/>
            <person name="Nanda I."/>
            <person name="Schmid M."/>
            <person name="Grummt F."/>
        </authorList>
    </citation>
    <scope>INTERACTION WITH DBF4</scope>
    <source>
        <strain>C57BL/6J</strain>
        <tissue>Egg</tissue>
        <tissue>Embryo</tissue>
    </source>
</reference>
<reference key="10">
    <citation type="journal article" date="2001" name="J. Biol. Chem.">
        <title>Replication factors MCM2 and ORC1 interact with the histone acetyltransferase HBO1.</title>
        <authorList>
            <person name="Burke T.W."/>
            <person name="Cook J.G."/>
            <person name="Asano M."/>
            <person name="Nevins J.R."/>
        </authorList>
    </citation>
    <scope>INTERACTION WITH KAT7</scope>
    <scope>MUTAGENESIS OF LEU-237</scope>
</reference>
<reference key="11">
    <citation type="journal article" date="2004" name="Mol. Cell. Proteomics">
        <title>Phosphoproteomic analysis of the developing mouse brain.</title>
        <authorList>
            <person name="Ballif B.A."/>
            <person name="Villen J."/>
            <person name="Beausoleil S.A."/>
            <person name="Schwartz D."/>
            <person name="Gygi S.P."/>
        </authorList>
    </citation>
    <scope>IDENTIFICATION BY MASS SPECTROMETRY [LARGE SCALE ANALYSIS]</scope>
    <source>
        <tissue>Embryonic brain</tissue>
    </source>
</reference>
<reference key="12">
    <citation type="journal article" date="2007" name="J. Proteome Res.">
        <title>A differential phosphoproteomic analysis of retinoic acid-treated P19 cells.</title>
        <authorList>
            <person name="Smith J.C."/>
            <person name="Duchesne M.A."/>
            <person name="Tozzi P."/>
            <person name="Ethier M."/>
            <person name="Figeys D."/>
        </authorList>
    </citation>
    <scope>PHOSPHORYLATION [LARGE SCALE ANALYSIS] AT SER-21</scope>
    <scope>IDENTIFICATION BY MASS SPECTROMETRY [LARGE SCALE ANALYSIS]</scope>
    <source>
        <tissue>Teratocarcinoma</tissue>
    </source>
</reference>
<reference key="13">
    <citation type="journal article" date="2007" name="Proc. Natl. Acad. Sci. U.S.A.">
        <title>Large-scale phosphorylation analysis of mouse liver.</title>
        <authorList>
            <person name="Villen J."/>
            <person name="Beausoleil S.A."/>
            <person name="Gerber S.A."/>
            <person name="Gygi S.P."/>
        </authorList>
    </citation>
    <scope>PHOSPHORYLATION [LARGE SCALE ANALYSIS] AT SER-21; SER-27; SER-139 AND SER-140</scope>
    <scope>IDENTIFICATION BY MASS SPECTROMETRY [LARGE SCALE ANALYSIS]</scope>
    <source>
        <tissue>Liver</tissue>
    </source>
</reference>
<reference key="14">
    <citation type="journal article" date="2009" name="Mol. Cell. Proteomics">
        <title>Large scale localization of protein phosphorylation by use of electron capture dissociation mass spectrometry.</title>
        <authorList>
            <person name="Sweet S.M."/>
            <person name="Bailey C.M."/>
            <person name="Cunningham D.L."/>
            <person name="Heath J.K."/>
            <person name="Cooper H.J."/>
        </authorList>
    </citation>
    <scope>ACETYLATION [LARGE SCALE ANALYSIS] AT ALA-2</scope>
    <scope>PHOSPHORYLATION [LARGE SCALE ANALYSIS] AT SER-12; SER-21; SER-27; SER-139 AND SER-140</scope>
    <scope>CLEAVAGE OF INITIATOR METHIONINE [LARGE SCALE ANALYSIS]</scope>
    <scope>IDENTIFICATION BY MASS SPECTROMETRY [LARGE SCALE ANALYSIS]</scope>
    <source>
        <tissue>Embryonic fibroblast</tissue>
    </source>
</reference>
<reference key="15">
    <citation type="journal article" date="2010" name="Cell">
        <title>A tissue-specific atlas of mouse protein phosphorylation and expression.</title>
        <authorList>
            <person name="Huttlin E.L."/>
            <person name="Jedrychowski M.P."/>
            <person name="Elias J.E."/>
            <person name="Goswami T."/>
            <person name="Rad R."/>
            <person name="Beausoleil S.A."/>
            <person name="Villen J."/>
            <person name="Haas W."/>
            <person name="Sowa M.E."/>
            <person name="Gygi S.P."/>
        </authorList>
    </citation>
    <scope>PHOSPHORYLATION [LARGE SCALE ANALYSIS] AT SER-21; SER-27; SER-41; SER-108; SER-139 AND SER-140</scope>
    <scope>IDENTIFICATION BY MASS SPECTROMETRY [LARGE SCALE ANALYSIS]</scope>
    <source>
        <tissue>Brown adipose tissue</tissue>
        <tissue>Heart</tissue>
        <tissue>Kidney</tissue>
        <tissue>Liver</tissue>
        <tissue>Lung</tissue>
        <tissue>Pancreas</tissue>
        <tissue>Spleen</tissue>
        <tissue>Testis</tissue>
    </source>
</reference>
<reference key="16">
    <citation type="journal article" date="2023" name="Nucleic Acids Res.">
        <title>The importance of nuclear RAGE-Mcm2 axis in diabetes or cancer-associated replication stress.</title>
        <authorList>
            <person name="Han Z."/>
            <person name="Andrs M."/>
            <person name="Madhavan B.K."/>
            <person name="Kaymak S."/>
            <person name="Sulaj A."/>
            <person name="Kender Z."/>
            <person name="Kopf S."/>
            <person name="Kihm L."/>
            <person name="Pepperkok R."/>
            <person name="Janscak P."/>
            <person name="Nawroth P."/>
            <person name="Kumar V."/>
        </authorList>
    </citation>
    <scope>INTERACTION WITH AGER</scope>
</reference>
<gene>
    <name type="primary">Mcm2</name>
    <name type="synonym">Bm28</name>
    <name type="synonym">Cdcl1</name>
    <name type="synonym">Kiaa0030</name>
    <name type="synonym">Mcmd2</name>
</gene>
<accession>P97310</accession>
<accession>O08971</accession>
<accession>O89057</accession>
<accession>Q8C2R0</accession>
<proteinExistence type="evidence at protein level"/>
<keyword id="KW-0007">Acetylation</keyword>
<keyword id="KW-0067">ATP-binding</keyword>
<keyword id="KW-0131">Cell cycle</keyword>
<keyword id="KW-0158">Chromosome</keyword>
<keyword id="KW-0903">Direct protein sequencing</keyword>
<keyword id="KW-0235">DNA replication</keyword>
<keyword id="KW-0238">DNA-binding</keyword>
<keyword id="KW-0347">Helicase</keyword>
<keyword id="KW-0378">Hydrolase</keyword>
<keyword id="KW-1017">Isopeptide bond</keyword>
<keyword id="KW-0479">Metal-binding</keyword>
<keyword id="KW-0547">Nucleotide-binding</keyword>
<keyword id="KW-0539">Nucleus</keyword>
<keyword id="KW-0597">Phosphoprotein</keyword>
<keyword id="KW-1185">Reference proteome</keyword>
<keyword id="KW-0832">Ubl conjugation</keyword>
<keyword id="KW-0862">Zinc</keyword>
<keyword id="KW-0863">Zinc-finger</keyword>
<name>MCM2_MOUSE</name>
<feature type="initiator methionine" description="Removed" evidence="13">
    <location>
        <position position="1"/>
    </location>
</feature>
<feature type="chain" id="PRO_0000194088" description="DNA replication licensing factor MCM2">
    <location>
        <begin position="2"/>
        <end position="904"/>
    </location>
</feature>
<feature type="domain" description="MCM">
    <location>
        <begin position="473"/>
        <end position="680"/>
    </location>
</feature>
<feature type="zinc finger region" description="C4-type" evidence="4">
    <location>
        <begin position="329"/>
        <end position="355"/>
    </location>
</feature>
<feature type="region of interest" description="Disordered" evidence="5">
    <location>
        <begin position="1"/>
        <end position="166"/>
    </location>
</feature>
<feature type="region of interest" description="Interaction with KAT7" evidence="8">
    <location>
        <begin position="2"/>
        <end position="257"/>
    </location>
</feature>
<feature type="region of interest" description="Interaction with DNJC9" evidence="2">
    <location>
        <begin position="61"/>
        <end position="130"/>
    </location>
</feature>
<feature type="short sequence motif" description="Arginine finger">
    <location>
        <begin position="655"/>
        <end position="658"/>
    </location>
</feature>
<feature type="compositionally biased region" description="Low complexity" evidence="5">
    <location>
        <begin position="1"/>
        <end position="12"/>
    </location>
</feature>
<feature type="compositionally biased region" description="Acidic residues" evidence="5">
    <location>
        <begin position="62"/>
        <end position="73"/>
    </location>
</feature>
<feature type="compositionally biased region" description="Basic and acidic residues" evidence="5">
    <location>
        <begin position="76"/>
        <end position="85"/>
    </location>
</feature>
<feature type="compositionally biased region" description="Acidic residues" evidence="5">
    <location>
        <begin position="88"/>
        <end position="104"/>
    </location>
</feature>
<feature type="compositionally biased region" description="Basic and acidic residues" evidence="5">
    <location>
        <begin position="111"/>
        <end position="125"/>
    </location>
</feature>
<feature type="binding site" evidence="2">
    <location>
        <position position="530"/>
    </location>
    <ligand>
        <name>ADP</name>
        <dbReference type="ChEBI" id="CHEBI:456216"/>
        <note>ligand shared with MCM6</note>
    </ligand>
</feature>
<feature type="binding site" evidence="2">
    <location>
        <position position="531"/>
    </location>
    <ligand>
        <name>ADP</name>
        <dbReference type="ChEBI" id="CHEBI:456216"/>
        <note>ligand shared with MCM6</note>
    </ligand>
</feature>
<feature type="modified residue" description="N-acetylalanine" evidence="13">
    <location>
        <position position="2"/>
    </location>
</feature>
<feature type="modified residue" description="Phosphoserine" evidence="13">
    <location>
        <position position="12"/>
    </location>
</feature>
<feature type="modified residue" description="Phosphoserine" evidence="11 12 13 14">
    <location>
        <position position="21"/>
    </location>
</feature>
<feature type="modified residue" description="Phosphothreonine" evidence="2">
    <location>
        <position position="25"/>
    </location>
</feature>
<feature type="modified residue" description="Phosphoserine" evidence="2">
    <location>
        <position position="26"/>
    </location>
</feature>
<feature type="modified residue" description="Phosphoserine" evidence="11 13 14">
    <location>
        <position position="27"/>
    </location>
</feature>
<feature type="modified residue" description="Phosphoserine" evidence="2">
    <location>
        <position position="32"/>
    </location>
</feature>
<feature type="modified residue" description="Phosphothreonine" evidence="2">
    <location>
        <position position="39"/>
    </location>
</feature>
<feature type="modified residue" description="Phosphoserine; by CDC7" evidence="2">
    <location>
        <position position="40"/>
    </location>
</feature>
<feature type="modified residue" description="Phosphoserine" evidence="14">
    <location>
        <position position="41"/>
    </location>
</feature>
<feature type="modified residue" description="Phosphoserine; by CDC7" evidence="2">
    <location>
        <position position="53"/>
    </location>
</feature>
<feature type="modified residue" description="Phosphothreonine" evidence="2">
    <location>
        <position position="59"/>
    </location>
</feature>
<feature type="modified residue" description="Phosphoserine" evidence="14">
    <location>
        <position position="108"/>
    </location>
</feature>
<feature type="modified residue" description="Phosphotyrosine" evidence="2">
    <location>
        <position position="137"/>
    </location>
</feature>
<feature type="modified residue" description="Phosphoserine" evidence="11 13 14">
    <location>
        <position position="139"/>
    </location>
</feature>
<feature type="modified residue" description="Phosphoserine" evidence="11 13 14">
    <location>
        <position position="140"/>
    </location>
</feature>
<feature type="modified residue" description="N6-acetyllysine" evidence="2">
    <location>
        <position position="216"/>
    </location>
</feature>
<feature type="modified residue" description="Phosphoserine" evidence="2">
    <location>
        <position position="381"/>
    </location>
</feature>
<feature type="modified residue" description="Phosphoserine" evidence="2">
    <location>
        <position position="484"/>
    </location>
</feature>
<feature type="cross-link" description="Glycyl lysine isopeptide (Lys-Gly) (interchain with G-Cter in SUMO2)" evidence="2">
    <location>
        <position position="178"/>
    </location>
</feature>
<feature type="mutagenesis site" description="Impairs interaction with KAT7." evidence="8">
    <original>L</original>
    <variation>P</variation>
    <location>
        <position position="237"/>
    </location>
</feature>
<feature type="sequence conflict" description="In Ref. 3; AAC16250." evidence="10" ref="3">
    <original>E</original>
    <variation>G</variation>
    <location>
        <position position="70"/>
    </location>
</feature>
<feature type="sequence conflict" description="In Ref. 3; AAC16250." evidence="10" ref="3">
    <original>L</original>
    <variation>P</variation>
    <location>
        <position position="135"/>
    </location>
</feature>
<feature type="sequence conflict" description="In Ref. 1; BAA22148." evidence="10" ref="1">
    <original>W</original>
    <variation>R</variation>
    <location>
        <position position="185"/>
    </location>
</feature>
<feature type="sequence conflict" description="In Ref. 3; AAC16250." evidence="10" ref="3">
    <original>Y</original>
    <variation>H</variation>
    <location>
        <position position="271"/>
    </location>
</feature>
<feature type="sequence conflict" description="In Ref. 7; AAC36510." evidence="10" ref="7">
    <original>N</original>
    <variation>D</variation>
    <location>
        <position position="506"/>
    </location>
</feature>
<feature type="sequence conflict" description="In Ref. 7; AAC36510." evidence="10" ref="7">
    <original>L</original>
    <variation>S</variation>
    <location>
        <position position="521"/>
    </location>
</feature>
<feature type="sequence conflict" description="In Ref. 7; AAC36510." evidence="10" ref="7">
    <original>D</original>
    <variation>N</variation>
    <location>
        <position position="648"/>
    </location>
</feature>
<feature type="sequence conflict" description="In Ref. 3; AAC16250." evidence="10" ref="3">
    <original>L</original>
    <variation>I</variation>
    <location>
        <position position="822"/>
    </location>
</feature>
<comment type="function">
    <text evidence="2 7">Acts as a component of the MCM2-7 complex (MCM complex) which is the replicative helicase essential for 'once per cell cycle' DNA replication initiation and elongation in eukaryotic cells. Core component of CDC45-MCM-GINS (CMG) helicase, the molecular machine that unwinds template DNA during replication, and around which the replisome is built. The active ATPase sites in the MCM2-7 ring are formed through the interaction surfaces of two neighboring subunits such that a critical structure of a conserved arginine finger motif is provided in trans relative to the ATP-binding site of the Walker A box of the adjacent subunit. The six ATPase active sites, however, are likely to contribute differentially to the complex helicase activity. Required for the entry in S phase and for cell division (PubMed:10567526). Plays a role in terminally differentiated hair cells development of the cochlea and induces cells apoptosis (By similarity).</text>
</comment>
<comment type="catalytic activity">
    <reaction evidence="2">
        <text>ATP + H2O = ADP + phosphate + H(+)</text>
        <dbReference type="Rhea" id="RHEA:13065"/>
        <dbReference type="ChEBI" id="CHEBI:15377"/>
        <dbReference type="ChEBI" id="CHEBI:15378"/>
        <dbReference type="ChEBI" id="CHEBI:30616"/>
        <dbReference type="ChEBI" id="CHEBI:43474"/>
        <dbReference type="ChEBI" id="CHEBI:456216"/>
        <dbReference type="EC" id="3.6.4.12"/>
    </reaction>
    <physiologicalReaction direction="left-to-right" evidence="2">
        <dbReference type="Rhea" id="RHEA:13066"/>
    </physiologicalReaction>
</comment>
<comment type="subunit">
    <text evidence="2 3 6 8 9">Component of the MCM2-7 complex. The complex forms a toroidal hexameric ring with the proposed subunit order MCM2-MCM6-MCM4-MCM7-MCM3-MCM5 (By similarity). Component of the CMG helicase complex, a hexameric ring of related MCM2-7 subunits stabilized by CDC45 and the tetrameric GINS complex (By similarity). Interacts with DBF4 (PubMed:10517317). Interacts with KAT7 (PubMed:11278932). May interact with MCM10 (By similarity). Component of the replisome complex composed of at least DONSON, MCM2, MCM7, PCNA and TICRR (By similarity). Forms a co-chaperone complex with DNAJC9 and histone H3.3-H4 heterodimers (By similarity). Within the complex, interacts (via N-terminus) with DNAJC9 (via C-terminus); the interaction is histone-dependent (By similarity). Interacts with AGER/RAGE; the interaction is increased following DNA replication stress and stabilizes the MCM2-7 complex at replication forks (PubMed:36807739).</text>
</comment>
<comment type="subcellular location">
    <subcellularLocation>
        <location evidence="2">Nucleus</location>
    </subcellularLocation>
    <subcellularLocation>
        <location evidence="2">Chromosome</location>
    </subcellularLocation>
    <text evidence="3">Associated with chromatin before the formation of nuclei and detaches from it as DNA replication progresses.</text>
</comment>
<comment type="PTM">
    <text evidence="2">Phosphorylated on Ser-108 by ATR in proliferating cells. Ser-108 proliferation is increased by genotoxic agents. Ser-40 is mediated by the CDC7-DBF4 and CDC7-DBF4B complexes, while Ser-53 phosphorylation is only mediated by the CDC7-DBF4 complex. Phosphorylation by the CDC7-DBF4 complex during G1/S phase is required for the initiation of DNA replication (By similarity).</text>
</comment>
<comment type="PTM">
    <text evidence="1">Acetylated by MCM3AP.</text>
</comment>
<comment type="PTM">
    <text evidence="1">O-glycosylated (O-GlcNAcylated), in a cell cycle-dependent manner.</text>
</comment>
<comment type="miscellaneous">
    <text evidence="7">Early fractionation of eukaryotic MCM proteins yielded a variety of dimeric, trimeric and tetrameric complexes with unclear biological significance. Specifically a MCM467 subcomplex is shown to have in vitro helicase activity which is inhibited by the MCM2 subunit. The MCM2-7 hexamer is the proposed physiological active complex.</text>
</comment>
<comment type="similarity">
    <text evidence="10">Belongs to the MCM family.</text>
</comment>
<comment type="sequence caution" evidence="10">
    <conflict type="erroneous initiation">
        <sequence resource="EMBL-CDS" id="BAC97849"/>
    </conflict>
    <text>Extended N-terminus.</text>
</comment>
<sequence length="904" mass="102078">MAESSESLSASSPARQRRRISDPLTSSPGRSSRRADALTSSPGRDLPPFEDESEGLLGTEGPMEEEEDGEELIGDGMERDYRPIPELDVYEAEGLALDDEDVEELTASQREAAERTMRQRDREAGRGLGRMRRGLLYDSSEEDEERPARKRRHVERATEDGEEDEEMIESIENLEDLKGHSVREWVSMAGPRLEIHHRFKNFLRTHVDSHGHNVFKERISDMCKENRESLVVNYEDLAAREHVLAYFLPEAPAELLQIFDEAALEVVLAMYPKYDRITNHIHVRISHLPLVEELRSLRQLHLNQLIRTSGVVTSCTGVLPQLSMVKYNCSKCNFVLGPFCQSQNQEVKPGSCPECQSAGPFEINMEETIYQNYQRIRIQESPGKVAAGRLPRSKDAILLADLVDSCKPGDEIELTGIYHNNYDGSLNTANGFPVFATIILANHVAKKDNKVAVGELTDEDVKMITGLSKDQQIGEKIFASIAPSIYGHEDIKRGLALALFGGEPKNPGGKHKVRGDINVLLCGDPGTAKSQFLKYIEKVSSRAIFTTGQGASAVGLTAYVQRHPVSREWTLEAGALVLADRGVCLIDEFDKMNDQDRTSIHEAMEQQSISISKAGIVTSLQARCTVIAAANPIGGRYDPSLTFSENVDLTEPIISRFDVLCVVRDTVDPVQDEMLARFVVGSHVRHHPSNKKDEGLTNGGTLEPAMPNTYGVEPLPQEVLKKYIIYAKERVRPKLNQMDQDKVARMYSDLRKESMATGSIPITVRHIESMIRMAEAHARMHLRDYVMEDDVNMAIRVMMESFIDTQKFSVMRSMRKTFARYLSFRRDNNDLLLFILKQLVAEQVTYQRNRFGAQQDTIEIPEKDLMDKARQINIHNLSAFYDSDLFKFNKFSRDLKRKLILQQF</sequence>
<evidence type="ECO:0000250" key="1">
    <source>
        <dbReference type="UniProtKB" id="P25205"/>
    </source>
</evidence>
<evidence type="ECO:0000250" key="2">
    <source>
        <dbReference type="UniProtKB" id="P49736"/>
    </source>
</evidence>
<evidence type="ECO:0000250" key="3">
    <source>
        <dbReference type="UniProtKB" id="P55861"/>
    </source>
</evidence>
<evidence type="ECO:0000255" key="4"/>
<evidence type="ECO:0000256" key="5">
    <source>
        <dbReference type="SAM" id="MobiDB-lite"/>
    </source>
</evidence>
<evidence type="ECO:0000269" key="6">
    <source>
    </source>
</evidence>
<evidence type="ECO:0000269" key="7">
    <source>
    </source>
</evidence>
<evidence type="ECO:0000269" key="8">
    <source>
    </source>
</evidence>
<evidence type="ECO:0000269" key="9">
    <source>
    </source>
</evidence>
<evidence type="ECO:0000305" key="10"/>
<evidence type="ECO:0007744" key="11">
    <source>
    </source>
</evidence>
<evidence type="ECO:0007744" key="12">
    <source>
    </source>
</evidence>
<evidence type="ECO:0007744" key="13">
    <source>
    </source>
</evidence>
<evidence type="ECO:0007744" key="14">
    <source>
    </source>
</evidence>
<protein>
    <recommendedName>
        <fullName>DNA replication licensing factor MCM2</fullName>
        <ecNumber evidence="2">3.6.4.12</ecNumber>
    </recommendedName>
    <alternativeName>
        <fullName>Minichromosome maintenance protein 2 homolog</fullName>
    </alternativeName>
    <alternativeName>
        <fullName>Nuclear protein BM28</fullName>
    </alternativeName>
</protein>